<protein>
    <recommendedName>
        <fullName evidence="1">DNA mismatch repair protein MutL</fullName>
    </recommendedName>
</protein>
<feature type="chain" id="PRO_1000192157" description="DNA mismatch repair protein MutL">
    <location>
        <begin position="1"/>
        <end position="647"/>
    </location>
</feature>
<feature type="region of interest" description="Disordered" evidence="2">
    <location>
        <begin position="377"/>
        <end position="396"/>
    </location>
</feature>
<feature type="compositionally biased region" description="Low complexity" evidence="2">
    <location>
        <begin position="387"/>
        <end position="396"/>
    </location>
</feature>
<evidence type="ECO:0000255" key="1">
    <source>
        <dbReference type="HAMAP-Rule" id="MF_00149"/>
    </source>
</evidence>
<evidence type="ECO:0000256" key="2">
    <source>
        <dbReference type="SAM" id="MobiDB-lite"/>
    </source>
</evidence>
<name>MUTL_BACC7</name>
<reference key="1">
    <citation type="submission" date="2008-10" db="EMBL/GenBank/DDBJ databases">
        <title>Genome sequence of Bacillus cereus AH187.</title>
        <authorList>
            <person name="Dodson R.J."/>
            <person name="Durkin A.S."/>
            <person name="Rosovitz M.J."/>
            <person name="Rasko D.A."/>
            <person name="Kolsto A.B."/>
            <person name="Okstad O.A."/>
            <person name="Ravel J."/>
            <person name="Sutton G."/>
        </authorList>
    </citation>
    <scope>NUCLEOTIDE SEQUENCE [LARGE SCALE GENOMIC DNA]</scope>
    <source>
        <strain>AH187</strain>
    </source>
</reference>
<sequence>MGKIRKLDDQLSNLIAAGEVVERPASVVKELVENSIDANSTSIEIHLEEAGLSKIRIIDNGDGIAEEDCIVAFERHATSKIKDENDLFRIRTLGFRGEALPSIASVSELELITSTGDAPGTHLIIKGGDIIKQEKTASRKGTDITVQNLFFNTPARLKYMKTIHTELGNITDIVYRIAMSHPEVSLKLFHNEKKLLHTSGNGDVRQVLASIYSIQVAKKLVPIEAESLDFTIKGYVTLPEVTRASRNYMSTIVNGRYVRNFVLMKAIQQGYHTLLPVGRYPIGFLSIEMDPMLVDVNVHPAKLEVRFSKEQELLKLIEETLQAAFKKIQLIPDAGVTTKKKEKDESVQEQFQFEHAKPKEPSMPEIVLPTGMDEKQEEPQAVKQSAQLWQPPKQEWQPPQSLVREEQSWQPSTKSIIEEPIREEKSWNSNDEDFELEELEEEVQEIEEIEMNGNDLPPLYPIGQMHGTYIFAQNDKGLYMIDQHAAQERINYEYFRDKVGRVAQEVQELLVPYRIDLSLTEFLRVEEQLEELKKVGLFLEQFGHQSFIVRSHPTWFPKGQETEIIDEMMEQVVKLKKVDIKKLREEAAIMMSCKASIKANQYLTNDQIFALLEELRTTTNPYTCPHGRPILVHHSTYELEKMFKRVM</sequence>
<organism>
    <name type="scientific">Bacillus cereus (strain AH187)</name>
    <dbReference type="NCBI Taxonomy" id="405534"/>
    <lineage>
        <taxon>Bacteria</taxon>
        <taxon>Bacillati</taxon>
        <taxon>Bacillota</taxon>
        <taxon>Bacilli</taxon>
        <taxon>Bacillales</taxon>
        <taxon>Bacillaceae</taxon>
        <taxon>Bacillus</taxon>
        <taxon>Bacillus cereus group</taxon>
    </lineage>
</organism>
<comment type="function">
    <text evidence="1">This protein is involved in the repair of mismatches in DNA. It is required for dam-dependent methyl-directed DNA mismatch repair. May act as a 'molecular matchmaker', a protein that promotes the formation of a stable complex between two or more DNA-binding proteins in an ATP-dependent manner without itself being part of a final effector complex.</text>
</comment>
<comment type="similarity">
    <text evidence="1">Belongs to the DNA mismatch repair MutL/HexB family.</text>
</comment>
<dbReference type="EMBL" id="CP001177">
    <property type="protein sequence ID" value="ACJ81666.1"/>
    <property type="molecule type" value="Genomic_DNA"/>
</dbReference>
<dbReference type="SMR" id="B7HLA2"/>
<dbReference type="KEGG" id="bcr:BCAH187_A3815"/>
<dbReference type="HOGENOM" id="CLU_004131_4_1_9"/>
<dbReference type="Proteomes" id="UP000002214">
    <property type="component" value="Chromosome"/>
</dbReference>
<dbReference type="GO" id="GO:0032300">
    <property type="term" value="C:mismatch repair complex"/>
    <property type="evidence" value="ECO:0007669"/>
    <property type="project" value="InterPro"/>
</dbReference>
<dbReference type="GO" id="GO:0005524">
    <property type="term" value="F:ATP binding"/>
    <property type="evidence" value="ECO:0007669"/>
    <property type="project" value="InterPro"/>
</dbReference>
<dbReference type="GO" id="GO:0016887">
    <property type="term" value="F:ATP hydrolysis activity"/>
    <property type="evidence" value="ECO:0007669"/>
    <property type="project" value="InterPro"/>
</dbReference>
<dbReference type="GO" id="GO:0140664">
    <property type="term" value="F:ATP-dependent DNA damage sensor activity"/>
    <property type="evidence" value="ECO:0007669"/>
    <property type="project" value="InterPro"/>
</dbReference>
<dbReference type="GO" id="GO:0030983">
    <property type="term" value="F:mismatched DNA binding"/>
    <property type="evidence" value="ECO:0007669"/>
    <property type="project" value="InterPro"/>
</dbReference>
<dbReference type="GO" id="GO:0006298">
    <property type="term" value="P:mismatch repair"/>
    <property type="evidence" value="ECO:0007669"/>
    <property type="project" value="UniProtKB-UniRule"/>
</dbReference>
<dbReference type="CDD" id="cd16926">
    <property type="entry name" value="HATPase_MutL-MLH-PMS-like"/>
    <property type="match status" value="1"/>
</dbReference>
<dbReference type="CDD" id="cd00782">
    <property type="entry name" value="MutL_Trans"/>
    <property type="match status" value="1"/>
</dbReference>
<dbReference type="FunFam" id="3.30.1370.100:FF:000004">
    <property type="entry name" value="DNA mismatch repair endonuclease MutL"/>
    <property type="match status" value="1"/>
</dbReference>
<dbReference type="FunFam" id="3.30.230.10:FF:000036">
    <property type="entry name" value="DNA mismatch repair endonuclease MutL"/>
    <property type="match status" value="1"/>
</dbReference>
<dbReference type="FunFam" id="3.30.565.10:FF:000003">
    <property type="entry name" value="DNA mismatch repair endonuclease MutL"/>
    <property type="match status" value="1"/>
</dbReference>
<dbReference type="Gene3D" id="3.30.230.10">
    <property type="match status" value="1"/>
</dbReference>
<dbReference type="Gene3D" id="3.30.565.10">
    <property type="entry name" value="Histidine kinase-like ATPase, C-terminal domain"/>
    <property type="match status" value="1"/>
</dbReference>
<dbReference type="Gene3D" id="3.30.1540.20">
    <property type="entry name" value="MutL, C-terminal domain, dimerisation subdomain"/>
    <property type="match status" value="1"/>
</dbReference>
<dbReference type="Gene3D" id="3.30.1370.100">
    <property type="entry name" value="MutL, C-terminal domain, regulatory subdomain"/>
    <property type="match status" value="1"/>
</dbReference>
<dbReference type="HAMAP" id="MF_00149">
    <property type="entry name" value="DNA_mis_repair"/>
    <property type="match status" value="1"/>
</dbReference>
<dbReference type="InterPro" id="IPR014762">
    <property type="entry name" value="DNA_mismatch_repair_CS"/>
</dbReference>
<dbReference type="InterPro" id="IPR020667">
    <property type="entry name" value="DNA_mismatch_repair_MutL"/>
</dbReference>
<dbReference type="InterPro" id="IPR013507">
    <property type="entry name" value="DNA_mismatch_S5_2-like"/>
</dbReference>
<dbReference type="InterPro" id="IPR036890">
    <property type="entry name" value="HATPase_C_sf"/>
</dbReference>
<dbReference type="InterPro" id="IPR002099">
    <property type="entry name" value="MutL/Mlh/PMS"/>
</dbReference>
<dbReference type="InterPro" id="IPR038973">
    <property type="entry name" value="MutL/Mlh/Pms-like"/>
</dbReference>
<dbReference type="InterPro" id="IPR014790">
    <property type="entry name" value="MutL_C"/>
</dbReference>
<dbReference type="InterPro" id="IPR042120">
    <property type="entry name" value="MutL_C_dimsub"/>
</dbReference>
<dbReference type="InterPro" id="IPR042121">
    <property type="entry name" value="MutL_C_regsub"/>
</dbReference>
<dbReference type="InterPro" id="IPR037198">
    <property type="entry name" value="MutL_C_sf"/>
</dbReference>
<dbReference type="InterPro" id="IPR020568">
    <property type="entry name" value="Ribosomal_Su5_D2-typ_SF"/>
</dbReference>
<dbReference type="InterPro" id="IPR014721">
    <property type="entry name" value="Ribsml_uS5_D2-typ_fold_subgr"/>
</dbReference>
<dbReference type="NCBIfam" id="TIGR00585">
    <property type="entry name" value="mutl"/>
    <property type="match status" value="1"/>
</dbReference>
<dbReference type="NCBIfam" id="NF000950">
    <property type="entry name" value="PRK00095.1-3"/>
    <property type="match status" value="1"/>
</dbReference>
<dbReference type="PANTHER" id="PTHR10073">
    <property type="entry name" value="DNA MISMATCH REPAIR PROTEIN MLH, PMS, MUTL"/>
    <property type="match status" value="1"/>
</dbReference>
<dbReference type="PANTHER" id="PTHR10073:SF12">
    <property type="entry name" value="DNA MISMATCH REPAIR PROTEIN MLH1"/>
    <property type="match status" value="1"/>
</dbReference>
<dbReference type="Pfam" id="PF01119">
    <property type="entry name" value="DNA_mis_repair"/>
    <property type="match status" value="1"/>
</dbReference>
<dbReference type="Pfam" id="PF13589">
    <property type="entry name" value="HATPase_c_3"/>
    <property type="match status" value="1"/>
</dbReference>
<dbReference type="Pfam" id="PF08676">
    <property type="entry name" value="MutL_C"/>
    <property type="match status" value="1"/>
</dbReference>
<dbReference type="SMART" id="SM01340">
    <property type="entry name" value="DNA_mis_repair"/>
    <property type="match status" value="1"/>
</dbReference>
<dbReference type="SMART" id="SM00853">
    <property type="entry name" value="MutL_C"/>
    <property type="match status" value="1"/>
</dbReference>
<dbReference type="SUPFAM" id="SSF55874">
    <property type="entry name" value="ATPase domain of HSP90 chaperone/DNA topoisomerase II/histidine kinase"/>
    <property type="match status" value="1"/>
</dbReference>
<dbReference type="SUPFAM" id="SSF118116">
    <property type="entry name" value="DNA mismatch repair protein MutL"/>
    <property type="match status" value="1"/>
</dbReference>
<dbReference type="SUPFAM" id="SSF54211">
    <property type="entry name" value="Ribosomal protein S5 domain 2-like"/>
    <property type="match status" value="1"/>
</dbReference>
<dbReference type="PROSITE" id="PS00058">
    <property type="entry name" value="DNA_MISMATCH_REPAIR_1"/>
    <property type="match status" value="1"/>
</dbReference>
<gene>
    <name evidence="1" type="primary">mutL</name>
    <name type="ordered locus">BCAH187_A3815</name>
</gene>
<keyword id="KW-0227">DNA damage</keyword>
<keyword id="KW-0234">DNA repair</keyword>
<accession>B7HLA2</accession>
<proteinExistence type="inferred from homology"/>